<organism>
    <name type="scientific">Shewanella baltica (strain OS155 / ATCC BAA-1091)</name>
    <dbReference type="NCBI Taxonomy" id="325240"/>
    <lineage>
        <taxon>Bacteria</taxon>
        <taxon>Pseudomonadati</taxon>
        <taxon>Pseudomonadota</taxon>
        <taxon>Gammaproteobacteria</taxon>
        <taxon>Alteromonadales</taxon>
        <taxon>Shewanellaceae</taxon>
        <taxon>Shewanella</taxon>
    </lineage>
</organism>
<name>DAPD_SHEB5</name>
<comment type="catalytic activity">
    <reaction evidence="1">
        <text>(S)-2,3,4,5-tetrahydrodipicolinate + succinyl-CoA + H2O = (S)-2-succinylamino-6-oxoheptanedioate + CoA</text>
        <dbReference type="Rhea" id="RHEA:17325"/>
        <dbReference type="ChEBI" id="CHEBI:15377"/>
        <dbReference type="ChEBI" id="CHEBI:15685"/>
        <dbReference type="ChEBI" id="CHEBI:16845"/>
        <dbReference type="ChEBI" id="CHEBI:57287"/>
        <dbReference type="ChEBI" id="CHEBI:57292"/>
        <dbReference type="EC" id="2.3.1.117"/>
    </reaction>
</comment>
<comment type="pathway">
    <text evidence="1">Amino-acid biosynthesis; L-lysine biosynthesis via DAP pathway; LL-2,6-diaminopimelate from (S)-tetrahydrodipicolinate (succinylase route): step 1/3.</text>
</comment>
<comment type="subunit">
    <text evidence="1">Homotrimer.</text>
</comment>
<comment type="subcellular location">
    <subcellularLocation>
        <location evidence="1">Cytoplasm</location>
    </subcellularLocation>
</comment>
<comment type="similarity">
    <text evidence="1">Belongs to the transferase hexapeptide repeat family.</text>
</comment>
<dbReference type="EC" id="2.3.1.117" evidence="1"/>
<dbReference type="EMBL" id="CP000563">
    <property type="protein sequence ID" value="ABN60965.1"/>
    <property type="molecule type" value="Genomic_DNA"/>
</dbReference>
<dbReference type="RefSeq" id="WP_006080976.1">
    <property type="nucleotide sequence ID" value="NC_009052.1"/>
</dbReference>
<dbReference type="SMR" id="A3D2K2"/>
<dbReference type="STRING" id="325240.Sbal_1447"/>
<dbReference type="GeneID" id="11771727"/>
<dbReference type="KEGG" id="sbl:Sbal_1447"/>
<dbReference type="HOGENOM" id="CLU_050859_0_1_6"/>
<dbReference type="OrthoDB" id="9775362at2"/>
<dbReference type="UniPathway" id="UPA00034">
    <property type="reaction ID" value="UER00019"/>
</dbReference>
<dbReference type="Proteomes" id="UP000001557">
    <property type="component" value="Chromosome"/>
</dbReference>
<dbReference type="GO" id="GO:0005737">
    <property type="term" value="C:cytoplasm"/>
    <property type="evidence" value="ECO:0007669"/>
    <property type="project" value="UniProtKB-SubCell"/>
</dbReference>
<dbReference type="GO" id="GO:0008666">
    <property type="term" value="F:2,3,4,5-tetrahydropyridine-2,6-dicarboxylate N-succinyltransferase activity"/>
    <property type="evidence" value="ECO:0007669"/>
    <property type="project" value="UniProtKB-UniRule"/>
</dbReference>
<dbReference type="GO" id="GO:0016779">
    <property type="term" value="F:nucleotidyltransferase activity"/>
    <property type="evidence" value="ECO:0007669"/>
    <property type="project" value="TreeGrafter"/>
</dbReference>
<dbReference type="GO" id="GO:0019877">
    <property type="term" value="P:diaminopimelate biosynthetic process"/>
    <property type="evidence" value="ECO:0007669"/>
    <property type="project" value="UniProtKB-UniRule"/>
</dbReference>
<dbReference type="GO" id="GO:0009089">
    <property type="term" value="P:lysine biosynthetic process via diaminopimelate"/>
    <property type="evidence" value="ECO:0007669"/>
    <property type="project" value="UniProtKB-UniRule"/>
</dbReference>
<dbReference type="CDD" id="cd03350">
    <property type="entry name" value="LbH_THP_succinylT"/>
    <property type="match status" value="1"/>
</dbReference>
<dbReference type="Gene3D" id="2.160.10.10">
    <property type="entry name" value="Hexapeptide repeat proteins"/>
    <property type="match status" value="1"/>
</dbReference>
<dbReference type="Gene3D" id="1.10.166.10">
    <property type="entry name" value="Tetrahydrodipicolinate-N-succinyltransferase, N-terminal domain"/>
    <property type="match status" value="1"/>
</dbReference>
<dbReference type="HAMAP" id="MF_00811">
    <property type="entry name" value="DapD"/>
    <property type="match status" value="1"/>
</dbReference>
<dbReference type="InterPro" id="IPR005664">
    <property type="entry name" value="DapD_Trfase_Hexpep_rpt_fam"/>
</dbReference>
<dbReference type="InterPro" id="IPR001451">
    <property type="entry name" value="Hexapep"/>
</dbReference>
<dbReference type="InterPro" id="IPR018357">
    <property type="entry name" value="Hexapep_transf_CS"/>
</dbReference>
<dbReference type="InterPro" id="IPR023180">
    <property type="entry name" value="THP_succinylTrfase_dom1"/>
</dbReference>
<dbReference type="InterPro" id="IPR037133">
    <property type="entry name" value="THP_succinylTrfase_N_sf"/>
</dbReference>
<dbReference type="InterPro" id="IPR011004">
    <property type="entry name" value="Trimer_LpxA-like_sf"/>
</dbReference>
<dbReference type="NCBIfam" id="TIGR00965">
    <property type="entry name" value="dapD"/>
    <property type="match status" value="1"/>
</dbReference>
<dbReference type="NCBIfam" id="NF008808">
    <property type="entry name" value="PRK11830.1"/>
    <property type="match status" value="1"/>
</dbReference>
<dbReference type="PANTHER" id="PTHR19136:SF52">
    <property type="entry name" value="2,3,4,5-TETRAHYDROPYRIDINE-2,6-DICARBOXYLATE N-SUCCINYLTRANSFERASE"/>
    <property type="match status" value="1"/>
</dbReference>
<dbReference type="PANTHER" id="PTHR19136">
    <property type="entry name" value="MOLYBDENUM COFACTOR GUANYLYLTRANSFERASE"/>
    <property type="match status" value="1"/>
</dbReference>
<dbReference type="Pfam" id="PF14602">
    <property type="entry name" value="Hexapep_2"/>
    <property type="match status" value="1"/>
</dbReference>
<dbReference type="Pfam" id="PF14805">
    <property type="entry name" value="THDPS_N_2"/>
    <property type="match status" value="1"/>
</dbReference>
<dbReference type="SUPFAM" id="SSF51161">
    <property type="entry name" value="Trimeric LpxA-like enzymes"/>
    <property type="match status" value="1"/>
</dbReference>
<dbReference type="PROSITE" id="PS00101">
    <property type="entry name" value="HEXAPEP_TRANSFERASES"/>
    <property type="match status" value="1"/>
</dbReference>
<protein>
    <recommendedName>
        <fullName evidence="1">2,3,4,5-tetrahydropyridine-2,6-dicarboxylate N-succinyltransferase</fullName>
        <ecNumber evidence="1">2.3.1.117</ecNumber>
    </recommendedName>
    <alternativeName>
        <fullName evidence="1">Tetrahydrodipicolinate N-succinyltransferase</fullName>
        <shortName evidence="1">THDP succinyltransferase</shortName>
        <shortName evidence="1">THP succinyltransferase</shortName>
        <shortName evidence="1">Tetrahydropicolinate succinylase</shortName>
    </alternativeName>
</protein>
<proteinExistence type="inferred from homology"/>
<gene>
    <name evidence="1" type="primary">dapD</name>
    <name type="ordered locus">Sbal_1447</name>
</gene>
<sequence length="274" mass="29720">MEALRQRIEAAFEARADITPSTVDASVRDDVQNVINMLDKGEVRVAEKIDGQWHVHQWLKKAVLLSFRIFDNVVIDGAETKYFDKVPLKFAEYDEARFKAEAIRVVPSATVRKGSFIGKNTVLMPSYVNLGAYVDEGTMVDTWATVGSCAQIGKNVHLSGGVGIGGVLEPLQAGPTIIEDNCFIGARSEIVEGVVVEEGSVISMGVYIGQSTRIYDRETGEVHYGRVPAGSVVVSGNLPSACGKYSLYAAIIVKKVDAKTRGKVGINELLRIVD</sequence>
<accession>A3D2K2</accession>
<keyword id="KW-0012">Acyltransferase</keyword>
<keyword id="KW-0028">Amino-acid biosynthesis</keyword>
<keyword id="KW-0963">Cytoplasm</keyword>
<keyword id="KW-0220">Diaminopimelate biosynthesis</keyword>
<keyword id="KW-0457">Lysine biosynthesis</keyword>
<keyword id="KW-1185">Reference proteome</keyword>
<keyword id="KW-0677">Repeat</keyword>
<keyword id="KW-0808">Transferase</keyword>
<feature type="chain" id="PRO_1000047181" description="2,3,4,5-tetrahydropyridine-2,6-dicarboxylate N-succinyltransferase">
    <location>
        <begin position="1"/>
        <end position="274"/>
    </location>
</feature>
<feature type="binding site" evidence="1">
    <location>
        <position position="104"/>
    </location>
    <ligand>
        <name>substrate</name>
    </ligand>
</feature>
<feature type="binding site" evidence="1">
    <location>
        <position position="141"/>
    </location>
    <ligand>
        <name>substrate</name>
    </ligand>
</feature>
<reference key="1">
    <citation type="submission" date="2007-02" db="EMBL/GenBank/DDBJ databases">
        <title>Complete sequence of chromosome of Shewanella baltica OS155.</title>
        <authorList>
            <consortium name="US DOE Joint Genome Institute"/>
            <person name="Copeland A."/>
            <person name="Lucas S."/>
            <person name="Lapidus A."/>
            <person name="Barry K."/>
            <person name="Detter J.C."/>
            <person name="Glavina del Rio T."/>
            <person name="Hammon N."/>
            <person name="Israni S."/>
            <person name="Dalin E."/>
            <person name="Tice H."/>
            <person name="Pitluck S."/>
            <person name="Sims D.R."/>
            <person name="Brettin T."/>
            <person name="Bruce D."/>
            <person name="Han C."/>
            <person name="Tapia R."/>
            <person name="Brainard J."/>
            <person name="Schmutz J."/>
            <person name="Larimer F."/>
            <person name="Land M."/>
            <person name="Hauser L."/>
            <person name="Kyrpides N."/>
            <person name="Mikhailova N."/>
            <person name="Brettar I."/>
            <person name="Klappenbach J."/>
            <person name="Konstantinidis K."/>
            <person name="Rodrigues J."/>
            <person name="Tiedje J."/>
            <person name="Richardson P."/>
        </authorList>
    </citation>
    <scope>NUCLEOTIDE SEQUENCE [LARGE SCALE GENOMIC DNA]</scope>
    <source>
        <strain>OS155 / ATCC BAA-1091</strain>
    </source>
</reference>
<evidence type="ECO:0000255" key="1">
    <source>
        <dbReference type="HAMAP-Rule" id="MF_00811"/>
    </source>
</evidence>